<dbReference type="EC" id="5.6.1.7" evidence="1"/>
<dbReference type="EMBL" id="CP000431">
    <property type="protein sequence ID" value="ABG93953.1"/>
    <property type="molecule type" value="Genomic_DNA"/>
</dbReference>
<dbReference type="SMR" id="Q0SET3"/>
<dbReference type="KEGG" id="rha:RHA1_ro02146"/>
<dbReference type="eggNOG" id="COG0459">
    <property type="taxonomic scope" value="Bacteria"/>
</dbReference>
<dbReference type="HOGENOM" id="CLU_016503_3_0_11"/>
<dbReference type="OrthoDB" id="9766614at2"/>
<dbReference type="Proteomes" id="UP000008710">
    <property type="component" value="Chromosome"/>
</dbReference>
<dbReference type="GO" id="GO:0005737">
    <property type="term" value="C:cytoplasm"/>
    <property type="evidence" value="ECO:0007669"/>
    <property type="project" value="UniProtKB-SubCell"/>
</dbReference>
<dbReference type="GO" id="GO:0005524">
    <property type="term" value="F:ATP binding"/>
    <property type="evidence" value="ECO:0007669"/>
    <property type="project" value="UniProtKB-UniRule"/>
</dbReference>
<dbReference type="GO" id="GO:0140662">
    <property type="term" value="F:ATP-dependent protein folding chaperone"/>
    <property type="evidence" value="ECO:0007669"/>
    <property type="project" value="InterPro"/>
</dbReference>
<dbReference type="GO" id="GO:0016853">
    <property type="term" value="F:isomerase activity"/>
    <property type="evidence" value="ECO:0007669"/>
    <property type="project" value="UniProtKB-KW"/>
</dbReference>
<dbReference type="GO" id="GO:0051082">
    <property type="term" value="F:unfolded protein binding"/>
    <property type="evidence" value="ECO:0007669"/>
    <property type="project" value="UniProtKB-UniRule"/>
</dbReference>
<dbReference type="GO" id="GO:0042026">
    <property type="term" value="P:protein refolding"/>
    <property type="evidence" value="ECO:0007669"/>
    <property type="project" value="UniProtKB-UniRule"/>
</dbReference>
<dbReference type="CDD" id="cd03344">
    <property type="entry name" value="GroEL"/>
    <property type="match status" value="1"/>
</dbReference>
<dbReference type="FunFam" id="3.50.7.10:FF:000001">
    <property type="entry name" value="60 kDa chaperonin"/>
    <property type="match status" value="1"/>
</dbReference>
<dbReference type="Gene3D" id="3.50.7.10">
    <property type="entry name" value="GroEL"/>
    <property type="match status" value="1"/>
</dbReference>
<dbReference type="Gene3D" id="1.10.560.10">
    <property type="entry name" value="GroEL-like equatorial domain"/>
    <property type="match status" value="1"/>
</dbReference>
<dbReference type="Gene3D" id="3.30.260.10">
    <property type="entry name" value="TCP-1-like chaperonin intermediate domain"/>
    <property type="match status" value="1"/>
</dbReference>
<dbReference type="HAMAP" id="MF_00600">
    <property type="entry name" value="CH60"/>
    <property type="match status" value="1"/>
</dbReference>
<dbReference type="InterPro" id="IPR018370">
    <property type="entry name" value="Chaperonin_Cpn60_CS"/>
</dbReference>
<dbReference type="InterPro" id="IPR001844">
    <property type="entry name" value="Cpn60/GroEL"/>
</dbReference>
<dbReference type="InterPro" id="IPR002423">
    <property type="entry name" value="Cpn60/GroEL/TCP-1"/>
</dbReference>
<dbReference type="InterPro" id="IPR027409">
    <property type="entry name" value="GroEL-like_apical_dom_sf"/>
</dbReference>
<dbReference type="InterPro" id="IPR027413">
    <property type="entry name" value="GROEL-like_equatorial_sf"/>
</dbReference>
<dbReference type="InterPro" id="IPR027410">
    <property type="entry name" value="TCP-1-like_intermed_sf"/>
</dbReference>
<dbReference type="NCBIfam" id="TIGR02348">
    <property type="entry name" value="GroEL"/>
    <property type="match status" value="1"/>
</dbReference>
<dbReference type="NCBIfam" id="NF000592">
    <property type="entry name" value="PRK00013.1"/>
    <property type="match status" value="1"/>
</dbReference>
<dbReference type="NCBIfam" id="NF009487">
    <property type="entry name" value="PRK12849.1"/>
    <property type="match status" value="1"/>
</dbReference>
<dbReference type="NCBIfam" id="NF009488">
    <property type="entry name" value="PRK12850.1"/>
    <property type="match status" value="1"/>
</dbReference>
<dbReference type="NCBIfam" id="NF009489">
    <property type="entry name" value="PRK12851.1"/>
    <property type="match status" value="1"/>
</dbReference>
<dbReference type="PANTHER" id="PTHR45633">
    <property type="entry name" value="60 KDA HEAT SHOCK PROTEIN, MITOCHONDRIAL"/>
    <property type="match status" value="1"/>
</dbReference>
<dbReference type="Pfam" id="PF00118">
    <property type="entry name" value="Cpn60_TCP1"/>
    <property type="match status" value="1"/>
</dbReference>
<dbReference type="PRINTS" id="PR00298">
    <property type="entry name" value="CHAPERONIN60"/>
</dbReference>
<dbReference type="SUPFAM" id="SSF52029">
    <property type="entry name" value="GroEL apical domain-like"/>
    <property type="match status" value="1"/>
</dbReference>
<dbReference type="SUPFAM" id="SSF48592">
    <property type="entry name" value="GroEL equatorial domain-like"/>
    <property type="match status" value="1"/>
</dbReference>
<dbReference type="SUPFAM" id="SSF54849">
    <property type="entry name" value="GroEL-intermediate domain like"/>
    <property type="match status" value="1"/>
</dbReference>
<dbReference type="PROSITE" id="PS00296">
    <property type="entry name" value="CHAPERONINS_CPN60"/>
    <property type="match status" value="1"/>
</dbReference>
<name>CH601_RHOJR</name>
<reference key="1">
    <citation type="journal article" date="2006" name="Proc. Natl. Acad. Sci. U.S.A.">
        <title>The complete genome of Rhodococcus sp. RHA1 provides insights into a catabolic powerhouse.</title>
        <authorList>
            <person name="McLeod M.P."/>
            <person name="Warren R.L."/>
            <person name="Hsiao W.W.L."/>
            <person name="Araki N."/>
            <person name="Myhre M."/>
            <person name="Fernandes C."/>
            <person name="Miyazawa D."/>
            <person name="Wong W."/>
            <person name="Lillquist A.L."/>
            <person name="Wang D."/>
            <person name="Dosanjh M."/>
            <person name="Hara H."/>
            <person name="Petrescu A."/>
            <person name="Morin R.D."/>
            <person name="Yang G."/>
            <person name="Stott J.M."/>
            <person name="Schein J.E."/>
            <person name="Shin H."/>
            <person name="Smailus D."/>
            <person name="Siddiqui A.S."/>
            <person name="Marra M.A."/>
            <person name="Jones S.J.M."/>
            <person name="Holt R."/>
            <person name="Brinkman F.S.L."/>
            <person name="Miyauchi K."/>
            <person name="Fukuda M."/>
            <person name="Davies J.E."/>
            <person name="Mohn W.W."/>
            <person name="Eltis L.D."/>
        </authorList>
    </citation>
    <scope>NUCLEOTIDE SEQUENCE [LARGE SCALE GENOMIC DNA]</scope>
    <source>
        <strain>RHA1</strain>
    </source>
</reference>
<proteinExistence type="inferred from homology"/>
<comment type="function">
    <text evidence="1">Together with its co-chaperonin GroES, plays an essential role in assisting protein folding. The GroEL-GroES system forms a nano-cage that allows encapsulation of the non-native substrate proteins and provides a physical environment optimized to promote and accelerate protein folding.</text>
</comment>
<comment type="catalytic activity">
    <reaction evidence="1">
        <text>ATP + H2O + a folded polypeptide = ADP + phosphate + an unfolded polypeptide.</text>
        <dbReference type="EC" id="5.6.1.7"/>
    </reaction>
</comment>
<comment type="subunit">
    <text evidence="1">Forms a cylinder of 14 subunits composed of two heptameric rings stacked back-to-back. Interacts with the co-chaperonin GroES.</text>
</comment>
<comment type="subcellular location">
    <subcellularLocation>
        <location evidence="1">Cytoplasm</location>
    </subcellularLocation>
</comment>
<comment type="similarity">
    <text evidence="1">Belongs to the chaperonin (HSP60) family.</text>
</comment>
<evidence type="ECO:0000255" key="1">
    <source>
        <dbReference type="HAMAP-Rule" id="MF_00600"/>
    </source>
</evidence>
<feature type="chain" id="PRO_0000256966" description="Chaperonin GroEL 1">
    <location>
        <begin position="1"/>
        <end position="541"/>
    </location>
</feature>
<feature type="binding site" evidence="1">
    <location>
        <begin position="29"/>
        <end position="32"/>
    </location>
    <ligand>
        <name>ATP</name>
        <dbReference type="ChEBI" id="CHEBI:30616"/>
    </ligand>
</feature>
<feature type="binding site" evidence="1">
    <location>
        <begin position="86"/>
        <end position="90"/>
    </location>
    <ligand>
        <name>ATP</name>
        <dbReference type="ChEBI" id="CHEBI:30616"/>
    </ligand>
</feature>
<feature type="binding site" evidence="1">
    <location>
        <position position="413"/>
    </location>
    <ligand>
        <name>ATP</name>
        <dbReference type="ChEBI" id="CHEBI:30616"/>
    </ligand>
</feature>
<feature type="binding site" evidence="1">
    <location>
        <position position="492"/>
    </location>
    <ligand>
        <name>ATP</name>
        <dbReference type="ChEBI" id="CHEBI:30616"/>
    </ligand>
</feature>
<organism>
    <name type="scientific">Rhodococcus jostii (strain RHA1)</name>
    <dbReference type="NCBI Taxonomy" id="101510"/>
    <lineage>
        <taxon>Bacteria</taxon>
        <taxon>Bacillati</taxon>
        <taxon>Actinomycetota</taxon>
        <taxon>Actinomycetes</taxon>
        <taxon>Mycobacteriales</taxon>
        <taxon>Nocardiaceae</taxon>
        <taxon>Rhodococcus</taxon>
    </lineage>
</organism>
<protein>
    <recommendedName>
        <fullName evidence="1">Chaperonin GroEL 1</fullName>
        <ecNumber evidence="1">5.6.1.7</ecNumber>
    </recommendedName>
    <alternativeName>
        <fullName evidence="1">60 kDa chaperonin 1</fullName>
    </alternativeName>
    <alternativeName>
        <fullName evidence="1">Chaperonin-60 1</fullName>
        <shortName evidence="1">Cpn60 1</shortName>
    </alternativeName>
</protein>
<accession>Q0SET3</accession>
<sequence length="541" mass="56652">MAKIIAFDEEARRGLERGLNALADAVKVTLGPKGRNVVLEKKWGAPTITNDGVSIAKEIELEDPYEKIGAELVKEVAKKTDDVAGDGTTTATVLAQALVREGLRNVAAGANPLGLKRGIEKAVEAVTVRLLETAKEIDTKEQIAATAGISAGDPSIGELIAEAMDKVGKEGVITVEESNTFGLQLELTEGMRFDKGYISAYFATDPERQEAVLEDAYILLVSSKISTVKDLLPLLEKVIQSGKPLVIIAEDVEGEALSTLVVNKIRGTFKSVAVKAPGFGDRRKAQLADIAILTGGEVISEEVGLSLETAGLELLGQARKVVITKDETTIVEGAGDPEAIAGRVAQIRAEIENSDSDYDREKLQERLAKLAGGVAVIKAGAATEVELKERKHRIEDAVRNAKAAVEEGIVAGGGVALLQSAPALDDLKLEGDEATGANIVRVALEAPLKQIAFNAGLEPGVVAEKVRNLPAGHGLNASTNEYGDLLEAGINDPVKVTRSALQNAASIAALFLTTEAVVADKPEKAGAPVGDPTGGMGGMDF</sequence>
<keyword id="KW-0067">ATP-binding</keyword>
<keyword id="KW-0143">Chaperone</keyword>
<keyword id="KW-0963">Cytoplasm</keyword>
<keyword id="KW-0413">Isomerase</keyword>
<keyword id="KW-0547">Nucleotide-binding</keyword>
<gene>
    <name evidence="1" type="primary">groEL1</name>
    <name evidence="1" type="synonym">groL1</name>
    <name type="ordered locus">RHA1_ro02146</name>
</gene>